<accession>Q8WKM1</accession>
<dbReference type="EMBL" id="AB038183">
    <property type="protein sequence ID" value="BAB83144.1"/>
    <property type="molecule type" value="Genomic_DNA"/>
</dbReference>
<dbReference type="GO" id="GO:0009507">
    <property type="term" value="C:chloroplast"/>
    <property type="evidence" value="ECO:0007669"/>
    <property type="project" value="UniProtKB-SubCell"/>
</dbReference>
<dbReference type="GO" id="GO:0003723">
    <property type="term" value="F:RNA binding"/>
    <property type="evidence" value="ECO:0007669"/>
    <property type="project" value="UniProtKB-KW"/>
</dbReference>
<dbReference type="GO" id="GO:0006397">
    <property type="term" value="P:mRNA processing"/>
    <property type="evidence" value="ECO:0007669"/>
    <property type="project" value="UniProtKB-KW"/>
</dbReference>
<dbReference type="GO" id="GO:0008380">
    <property type="term" value="P:RNA splicing"/>
    <property type="evidence" value="ECO:0007669"/>
    <property type="project" value="UniProtKB-UniRule"/>
</dbReference>
<dbReference type="GO" id="GO:0008033">
    <property type="term" value="P:tRNA processing"/>
    <property type="evidence" value="ECO:0007669"/>
    <property type="project" value="UniProtKB-KW"/>
</dbReference>
<dbReference type="HAMAP" id="MF_01390">
    <property type="entry name" value="MatK"/>
    <property type="match status" value="1"/>
</dbReference>
<dbReference type="InterPro" id="IPR024937">
    <property type="entry name" value="Domain_X"/>
</dbReference>
<dbReference type="InterPro" id="IPR002866">
    <property type="entry name" value="Maturase_MatK"/>
</dbReference>
<dbReference type="InterPro" id="IPR024942">
    <property type="entry name" value="Maturase_MatK_N"/>
</dbReference>
<dbReference type="PANTHER" id="PTHR34811">
    <property type="entry name" value="MATURASE K"/>
    <property type="match status" value="1"/>
</dbReference>
<dbReference type="PANTHER" id="PTHR34811:SF1">
    <property type="entry name" value="MATURASE K"/>
    <property type="match status" value="1"/>
</dbReference>
<dbReference type="Pfam" id="PF01348">
    <property type="entry name" value="Intron_maturas2"/>
    <property type="match status" value="1"/>
</dbReference>
<dbReference type="Pfam" id="PF01824">
    <property type="entry name" value="MatK_N"/>
    <property type="match status" value="1"/>
</dbReference>
<sequence>MAEFQGYLELDRSWKHDLLYPLIFREYIYVFAHDLGLNRSNLLENVGYDNKSSLLIVKRLISRMYQQNHFIISANDSNQNQLFGYNKNLYSQMISEGFAVIVEIPFSLRLVSSLKGTEIVKYYNLRSIHSIFPFLEDKFSQLNYVSDVLIPYPIHLEILVQTLRYWVKDASSLHLLRFFLHDYYNWNTLIIPNKYISIFSKSNPRLFLFLYNSHVCEYESILLFLRNQSSHLRLTSSGGFFERIYFYGKIKHPVEEVFANDSPTSLWFLEDLFMHYVRYQGKSILASKDTPLFMNKWKYYLVLLWQCHFYVWSQPGRMYINQLCKHSFSFLGYLSSMQINLSVVRSQMLENSFLMDNAMKKIDTLVPISLLIGSLDKMKFCNVLGHPVSKSTWADSSDFDIIDRFVCICRNLFHYYSGSSKKKSLYRIKYILRLSCVKTLARKPKSTVRTFLKKLGSNLLEEFFTEEEKVLSLIFPRTYSALRRSYKGRIWDLDIFCINDLVNHK</sequence>
<feature type="chain" id="PRO_0000143528" description="Maturase K">
    <location>
        <begin position="1"/>
        <end position="505"/>
    </location>
</feature>
<gene>
    <name evidence="1" type="primary">matK</name>
</gene>
<organism>
    <name type="scientific">Morus alba</name>
    <name type="common">White mulberry</name>
    <dbReference type="NCBI Taxonomy" id="3498"/>
    <lineage>
        <taxon>Eukaryota</taxon>
        <taxon>Viridiplantae</taxon>
        <taxon>Streptophyta</taxon>
        <taxon>Embryophyta</taxon>
        <taxon>Tracheophyta</taxon>
        <taxon>Spermatophyta</taxon>
        <taxon>Magnoliopsida</taxon>
        <taxon>eudicotyledons</taxon>
        <taxon>Gunneridae</taxon>
        <taxon>Pentapetalae</taxon>
        <taxon>rosids</taxon>
        <taxon>fabids</taxon>
        <taxon>Rosales</taxon>
        <taxon>Moraceae</taxon>
        <taxon>Moreae</taxon>
        <taxon>Morus</taxon>
    </lineage>
</organism>
<comment type="function">
    <text evidence="1">Usually encoded in the trnK tRNA gene intron. Probably assists in splicing its own and other chloroplast group II introns.</text>
</comment>
<comment type="subcellular location">
    <subcellularLocation>
        <location>Plastid</location>
        <location>Chloroplast</location>
    </subcellularLocation>
</comment>
<comment type="similarity">
    <text evidence="1">Belongs to the intron maturase 2 family. MatK subfamily.</text>
</comment>
<evidence type="ECO:0000255" key="1">
    <source>
        <dbReference type="HAMAP-Rule" id="MF_01390"/>
    </source>
</evidence>
<reference key="1">
    <citation type="submission" date="2000-02" db="EMBL/GenBank/DDBJ databases">
        <title>Phylogenetic relationships of the aquatic angiosperm family Podostemaceae inferred from matK sequence data.</title>
        <authorList>
            <person name="Kita Y."/>
            <person name="Kato M."/>
        </authorList>
    </citation>
    <scope>NUCLEOTIDE SEQUENCE [GENOMIC DNA]</scope>
</reference>
<keyword id="KW-0150">Chloroplast</keyword>
<keyword id="KW-0507">mRNA processing</keyword>
<keyword id="KW-0934">Plastid</keyword>
<keyword id="KW-0694">RNA-binding</keyword>
<keyword id="KW-0819">tRNA processing</keyword>
<geneLocation type="chloroplast"/>
<name>MATK_MORAL</name>
<protein>
    <recommendedName>
        <fullName evidence="1">Maturase K</fullName>
    </recommendedName>
    <alternativeName>
        <fullName evidence="1">Intron maturase</fullName>
    </alternativeName>
</protein>
<proteinExistence type="inferred from homology"/>